<accession>C4KIZ2</accession>
<gene>
    <name evidence="1" type="primary">lig</name>
    <name type="ordered locus">M164_1953</name>
</gene>
<feature type="chain" id="PRO_1000205956" description="DNA ligase">
    <location>
        <begin position="1"/>
        <end position="601"/>
    </location>
</feature>
<feature type="region of interest" description="Disordered" evidence="2">
    <location>
        <begin position="568"/>
        <end position="601"/>
    </location>
</feature>
<feature type="active site" description="N6-AMP-lysine intermediate" evidence="1">
    <location>
        <position position="260"/>
    </location>
</feature>
<feature type="binding site" evidence="1">
    <location>
        <position position="258"/>
    </location>
    <ligand>
        <name>ATP</name>
        <dbReference type="ChEBI" id="CHEBI:30616"/>
    </ligand>
</feature>
<feature type="binding site" evidence="1">
    <location>
        <position position="265"/>
    </location>
    <ligand>
        <name>ATP</name>
        <dbReference type="ChEBI" id="CHEBI:30616"/>
    </ligand>
</feature>
<feature type="binding site" evidence="1">
    <location>
        <position position="280"/>
    </location>
    <ligand>
        <name>ATP</name>
        <dbReference type="ChEBI" id="CHEBI:30616"/>
    </ligand>
</feature>
<feature type="binding site" evidence="1">
    <location>
        <position position="310"/>
    </location>
    <ligand>
        <name>ATP</name>
        <dbReference type="ChEBI" id="CHEBI:30616"/>
    </ligand>
</feature>
<feature type="binding site" evidence="1">
    <location>
        <position position="350"/>
    </location>
    <ligand>
        <name>ATP</name>
        <dbReference type="ChEBI" id="CHEBI:30616"/>
    </ligand>
</feature>
<feature type="binding site" evidence="1">
    <location>
        <position position="427"/>
    </location>
    <ligand>
        <name>ATP</name>
        <dbReference type="ChEBI" id="CHEBI:30616"/>
    </ligand>
</feature>
<feature type="binding site" evidence="1">
    <location>
        <position position="433"/>
    </location>
    <ligand>
        <name>ATP</name>
        <dbReference type="ChEBI" id="CHEBI:30616"/>
    </ligand>
</feature>
<sequence length="601" mass="67716">MEFKVIAEYFDKLEKISSRLQLTALLADLLSKSDKAIIDKVVYIIQGKLWPDFLGYPELGIGEKFLIKAISIATNTDENSVENLYKSIGDLGEVARRLKSKQQSTGILGFLGTSSKESLKVDEVYSTLSKVALTTGEGSRDLKIRLLAGLLKKADPLEAKFLVRFVEGRLRVGIGDATVLDAMAIAFGGGQSASEIVERAYNLRADLGNIAKIIVEKGIEALKTLKPEVGIPIRPMLAERLSNPEEILKKVGGSALVDYKYDGERAQIHKKDDKIFIFSRRLENITSQYPDVVEYISKYTEGKEFIIEGEIVAVDPESGEMRSFQELMHRKRKSDIYEAIKEYPVNVFLFDLMYYEDVDYTTKPLEVRRKLLESIVKPNDYVKIAHHIQVNNVEDLKSFFYRAISEGGEGVMVKAIGKDAIYQAGARGWLWIKLKRDYQSEMADTVDLVVVGGFYGKGKRGGKISSLLMAAYNPKTDTFESVCKVASGFSDEQLDELQKKLMEIKRDIKHPRVNSKMEPDIWVEPVYVAEIIGAEITISPLHTCCQDVVEKDAGLSIRFPRFIRWRDDKSPEDATTTDEILEMYNKQPKKKIESPPIDESV</sequence>
<evidence type="ECO:0000255" key="1">
    <source>
        <dbReference type="HAMAP-Rule" id="MF_00407"/>
    </source>
</evidence>
<evidence type="ECO:0000256" key="2">
    <source>
        <dbReference type="SAM" id="MobiDB-lite"/>
    </source>
</evidence>
<comment type="function">
    <text evidence="1">DNA ligase that seals nicks in double-stranded DNA during DNA replication, DNA recombination and DNA repair.</text>
</comment>
<comment type="catalytic activity">
    <reaction evidence="1">
        <text>ATP + (deoxyribonucleotide)n-3'-hydroxyl + 5'-phospho-(deoxyribonucleotide)m = (deoxyribonucleotide)n+m + AMP + diphosphate.</text>
        <dbReference type="EC" id="6.5.1.1"/>
    </reaction>
</comment>
<comment type="cofactor">
    <cofactor evidence="1">
        <name>Mg(2+)</name>
        <dbReference type="ChEBI" id="CHEBI:18420"/>
    </cofactor>
</comment>
<comment type="similarity">
    <text evidence="1">Belongs to the ATP-dependent DNA ligase family.</text>
</comment>
<name>DNLI_SACI6</name>
<organism>
    <name type="scientific">Saccharolobus islandicus (strain M.16.4 / Kamchatka #3)</name>
    <name type="common">Sulfolobus islandicus</name>
    <dbReference type="NCBI Taxonomy" id="426118"/>
    <lineage>
        <taxon>Archaea</taxon>
        <taxon>Thermoproteota</taxon>
        <taxon>Thermoprotei</taxon>
        <taxon>Sulfolobales</taxon>
        <taxon>Sulfolobaceae</taxon>
        <taxon>Saccharolobus</taxon>
    </lineage>
</organism>
<dbReference type="EC" id="6.5.1.1" evidence="1"/>
<dbReference type="EMBL" id="CP001402">
    <property type="protein sequence ID" value="ACR42556.1"/>
    <property type="molecule type" value="Genomic_DNA"/>
</dbReference>
<dbReference type="RefSeq" id="WP_012711916.1">
    <property type="nucleotide sequence ID" value="NC_012726.1"/>
</dbReference>
<dbReference type="SMR" id="C4KIZ2"/>
<dbReference type="KEGG" id="sid:M164_1953"/>
<dbReference type="HOGENOM" id="CLU_005138_6_0_2"/>
<dbReference type="Proteomes" id="UP000001479">
    <property type="component" value="Chromosome"/>
</dbReference>
<dbReference type="GO" id="GO:0005524">
    <property type="term" value="F:ATP binding"/>
    <property type="evidence" value="ECO:0007669"/>
    <property type="project" value="UniProtKB-UniRule"/>
</dbReference>
<dbReference type="GO" id="GO:0003677">
    <property type="term" value="F:DNA binding"/>
    <property type="evidence" value="ECO:0007669"/>
    <property type="project" value="InterPro"/>
</dbReference>
<dbReference type="GO" id="GO:0003910">
    <property type="term" value="F:DNA ligase (ATP) activity"/>
    <property type="evidence" value="ECO:0007669"/>
    <property type="project" value="UniProtKB-UniRule"/>
</dbReference>
<dbReference type="GO" id="GO:0046872">
    <property type="term" value="F:metal ion binding"/>
    <property type="evidence" value="ECO:0007669"/>
    <property type="project" value="UniProtKB-KW"/>
</dbReference>
<dbReference type="GO" id="GO:0051301">
    <property type="term" value="P:cell division"/>
    <property type="evidence" value="ECO:0007669"/>
    <property type="project" value="UniProtKB-KW"/>
</dbReference>
<dbReference type="GO" id="GO:0071897">
    <property type="term" value="P:DNA biosynthetic process"/>
    <property type="evidence" value="ECO:0007669"/>
    <property type="project" value="InterPro"/>
</dbReference>
<dbReference type="GO" id="GO:0006310">
    <property type="term" value="P:DNA recombination"/>
    <property type="evidence" value="ECO:0007669"/>
    <property type="project" value="UniProtKB-UniRule"/>
</dbReference>
<dbReference type="GO" id="GO:0006281">
    <property type="term" value="P:DNA repair"/>
    <property type="evidence" value="ECO:0007669"/>
    <property type="project" value="UniProtKB-UniRule"/>
</dbReference>
<dbReference type="GO" id="GO:0006273">
    <property type="term" value="P:lagging strand elongation"/>
    <property type="evidence" value="ECO:0007669"/>
    <property type="project" value="TreeGrafter"/>
</dbReference>
<dbReference type="CDD" id="cd07901">
    <property type="entry name" value="Adenylation_DNA_ligase_Arch_LigB"/>
    <property type="match status" value="1"/>
</dbReference>
<dbReference type="CDD" id="cd07969">
    <property type="entry name" value="OBF_DNA_ligase_I"/>
    <property type="match status" value="1"/>
</dbReference>
<dbReference type="FunFam" id="1.10.3260.10:FF:000007">
    <property type="entry name" value="DNA ligase"/>
    <property type="match status" value="1"/>
</dbReference>
<dbReference type="FunFam" id="2.40.50.140:FF:000062">
    <property type="entry name" value="DNA ligase"/>
    <property type="match status" value="1"/>
</dbReference>
<dbReference type="FunFam" id="3.30.470.30:FF:000012">
    <property type="entry name" value="Probable DNA ligase"/>
    <property type="match status" value="1"/>
</dbReference>
<dbReference type="Gene3D" id="1.10.3260.10">
    <property type="entry name" value="DNA ligase, ATP-dependent, N-terminal domain"/>
    <property type="match status" value="1"/>
</dbReference>
<dbReference type="Gene3D" id="3.30.470.30">
    <property type="entry name" value="DNA ligase/mRNA capping enzyme"/>
    <property type="match status" value="1"/>
</dbReference>
<dbReference type="Gene3D" id="2.40.50.140">
    <property type="entry name" value="Nucleic acid-binding proteins"/>
    <property type="match status" value="1"/>
</dbReference>
<dbReference type="HAMAP" id="MF_00407">
    <property type="entry name" value="DNA_ligase"/>
    <property type="match status" value="1"/>
</dbReference>
<dbReference type="InterPro" id="IPR050191">
    <property type="entry name" value="ATP-dep_DNA_ligase"/>
</dbReference>
<dbReference type="InterPro" id="IPR022865">
    <property type="entry name" value="DNA_ligae_ATP-dep_bac/arc"/>
</dbReference>
<dbReference type="InterPro" id="IPR000977">
    <property type="entry name" value="DNA_ligase_ATP-dep"/>
</dbReference>
<dbReference type="InterPro" id="IPR012309">
    <property type="entry name" value="DNA_ligase_ATP-dep_C"/>
</dbReference>
<dbReference type="InterPro" id="IPR012310">
    <property type="entry name" value="DNA_ligase_ATP-dep_cent"/>
</dbReference>
<dbReference type="InterPro" id="IPR016059">
    <property type="entry name" value="DNA_ligase_ATP-dep_CS"/>
</dbReference>
<dbReference type="InterPro" id="IPR012308">
    <property type="entry name" value="DNA_ligase_ATP-dep_N"/>
</dbReference>
<dbReference type="InterPro" id="IPR036599">
    <property type="entry name" value="DNA_ligase_N_sf"/>
</dbReference>
<dbReference type="InterPro" id="IPR012340">
    <property type="entry name" value="NA-bd_OB-fold"/>
</dbReference>
<dbReference type="NCBIfam" id="TIGR00574">
    <property type="entry name" value="dnl1"/>
    <property type="match status" value="1"/>
</dbReference>
<dbReference type="PANTHER" id="PTHR45674:SF4">
    <property type="entry name" value="DNA LIGASE 1"/>
    <property type="match status" value="1"/>
</dbReference>
<dbReference type="PANTHER" id="PTHR45674">
    <property type="entry name" value="DNA LIGASE 1/3 FAMILY MEMBER"/>
    <property type="match status" value="1"/>
</dbReference>
<dbReference type="Pfam" id="PF04679">
    <property type="entry name" value="DNA_ligase_A_C"/>
    <property type="match status" value="1"/>
</dbReference>
<dbReference type="Pfam" id="PF01068">
    <property type="entry name" value="DNA_ligase_A_M"/>
    <property type="match status" value="1"/>
</dbReference>
<dbReference type="Pfam" id="PF04675">
    <property type="entry name" value="DNA_ligase_A_N"/>
    <property type="match status" value="1"/>
</dbReference>
<dbReference type="SUPFAM" id="SSF117018">
    <property type="entry name" value="ATP-dependent DNA ligase DNA-binding domain"/>
    <property type="match status" value="1"/>
</dbReference>
<dbReference type="SUPFAM" id="SSF56091">
    <property type="entry name" value="DNA ligase/mRNA capping enzyme, catalytic domain"/>
    <property type="match status" value="1"/>
</dbReference>
<dbReference type="SUPFAM" id="SSF50249">
    <property type="entry name" value="Nucleic acid-binding proteins"/>
    <property type="match status" value="1"/>
</dbReference>
<dbReference type="PROSITE" id="PS00697">
    <property type="entry name" value="DNA_LIGASE_A1"/>
    <property type="match status" value="1"/>
</dbReference>
<dbReference type="PROSITE" id="PS00333">
    <property type="entry name" value="DNA_LIGASE_A2"/>
    <property type="match status" value="1"/>
</dbReference>
<dbReference type="PROSITE" id="PS50160">
    <property type="entry name" value="DNA_LIGASE_A3"/>
    <property type="match status" value="1"/>
</dbReference>
<keyword id="KW-0067">ATP-binding</keyword>
<keyword id="KW-0131">Cell cycle</keyword>
<keyword id="KW-0132">Cell division</keyword>
<keyword id="KW-0227">DNA damage</keyword>
<keyword id="KW-0233">DNA recombination</keyword>
<keyword id="KW-0234">DNA repair</keyword>
<keyword id="KW-0235">DNA replication</keyword>
<keyword id="KW-0436">Ligase</keyword>
<keyword id="KW-0460">Magnesium</keyword>
<keyword id="KW-0479">Metal-binding</keyword>
<keyword id="KW-0547">Nucleotide-binding</keyword>
<reference key="1">
    <citation type="journal article" date="2009" name="Proc. Natl. Acad. Sci. U.S.A.">
        <title>Biogeography of the Sulfolobus islandicus pan-genome.</title>
        <authorList>
            <person name="Reno M.L."/>
            <person name="Held N.L."/>
            <person name="Fields C.J."/>
            <person name="Burke P.V."/>
            <person name="Whitaker R.J."/>
        </authorList>
    </citation>
    <scope>NUCLEOTIDE SEQUENCE [LARGE SCALE GENOMIC DNA]</scope>
    <source>
        <strain>M.16.4 / Kamchatka #3</strain>
    </source>
</reference>
<proteinExistence type="inferred from homology"/>
<protein>
    <recommendedName>
        <fullName evidence="1">DNA ligase</fullName>
        <ecNumber evidence="1">6.5.1.1</ecNumber>
    </recommendedName>
    <alternativeName>
        <fullName evidence="1">Polydeoxyribonucleotide synthase [ATP]</fullName>
    </alternativeName>
</protein>